<accession>A3Q9U4</accession>
<gene>
    <name evidence="1" type="primary">cyoE2</name>
    <name type="ordered locus">Shew_0370</name>
</gene>
<evidence type="ECO:0000255" key="1">
    <source>
        <dbReference type="HAMAP-Rule" id="MF_00154"/>
    </source>
</evidence>
<keyword id="KW-0997">Cell inner membrane</keyword>
<keyword id="KW-1003">Cell membrane</keyword>
<keyword id="KW-0350">Heme biosynthesis</keyword>
<keyword id="KW-0472">Membrane</keyword>
<keyword id="KW-1185">Reference proteome</keyword>
<keyword id="KW-0808">Transferase</keyword>
<keyword id="KW-0812">Transmembrane</keyword>
<keyword id="KW-1133">Transmembrane helix</keyword>
<name>CYOE2_SHELP</name>
<protein>
    <recommendedName>
        <fullName evidence="1">Protoheme IX farnesyltransferase 2</fullName>
        <ecNumber evidence="1">2.5.1.141</ecNumber>
    </recommendedName>
    <alternativeName>
        <fullName evidence="1">Heme B farnesyltransferase 2</fullName>
    </alternativeName>
    <alternativeName>
        <fullName evidence="1">Heme O synthase 2</fullName>
    </alternativeName>
</protein>
<sequence>MIRHSTSTQVAAPLGAYLQVTKPGIIMGNLIAVVGGFLLAARGEVDAVLMLATLVGLSLVVASGCAINNYIDRDIDAKMQRTCRRATVTGAIPLKQVLGLGIALGVLGFGLLAWFTNLAALLFAAFGYLVYVGLYSLYMKRNSVYGTLVGSLSGAVPPVVGYCAVTGRMDGAALILLAMFSLWQMPHSYAIAIFRFKDYEAANIPVLPVAQGVEKAKLHIVFYIALFALVSTLLPLAGYTGVGFMAVSCVTSFWWLLMALKGYRSDVNLLRWSRQVFGFSILTIAILSLTMALDFQVAGQAPLLAMLG</sequence>
<dbReference type="EC" id="2.5.1.141" evidence="1"/>
<dbReference type="EMBL" id="CP000606">
    <property type="protein sequence ID" value="ABO22242.1"/>
    <property type="molecule type" value="Genomic_DNA"/>
</dbReference>
<dbReference type="RefSeq" id="WP_011864176.1">
    <property type="nucleotide sequence ID" value="NC_009092.1"/>
</dbReference>
<dbReference type="SMR" id="A3Q9U4"/>
<dbReference type="STRING" id="323850.Shew_0370"/>
<dbReference type="KEGG" id="slo:Shew_0370"/>
<dbReference type="eggNOG" id="COG0109">
    <property type="taxonomic scope" value="Bacteria"/>
</dbReference>
<dbReference type="HOGENOM" id="CLU_029631_0_0_6"/>
<dbReference type="OrthoDB" id="9814417at2"/>
<dbReference type="UniPathway" id="UPA00834">
    <property type="reaction ID" value="UER00712"/>
</dbReference>
<dbReference type="Proteomes" id="UP000001558">
    <property type="component" value="Chromosome"/>
</dbReference>
<dbReference type="GO" id="GO:0005886">
    <property type="term" value="C:plasma membrane"/>
    <property type="evidence" value="ECO:0007669"/>
    <property type="project" value="UniProtKB-SubCell"/>
</dbReference>
<dbReference type="GO" id="GO:0008495">
    <property type="term" value="F:protoheme IX farnesyltransferase activity"/>
    <property type="evidence" value="ECO:0007669"/>
    <property type="project" value="UniProtKB-UniRule"/>
</dbReference>
<dbReference type="GO" id="GO:0048034">
    <property type="term" value="P:heme O biosynthetic process"/>
    <property type="evidence" value="ECO:0007669"/>
    <property type="project" value="UniProtKB-UniRule"/>
</dbReference>
<dbReference type="CDD" id="cd13957">
    <property type="entry name" value="PT_UbiA_Cox10"/>
    <property type="match status" value="1"/>
</dbReference>
<dbReference type="FunFam" id="1.10.357.140:FF:000001">
    <property type="entry name" value="Protoheme IX farnesyltransferase"/>
    <property type="match status" value="1"/>
</dbReference>
<dbReference type="Gene3D" id="1.10.357.140">
    <property type="entry name" value="UbiA prenyltransferase"/>
    <property type="match status" value="1"/>
</dbReference>
<dbReference type="HAMAP" id="MF_00154">
    <property type="entry name" value="CyoE_CtaB"/>
    <property type="match status" value="1"/>
</dbReference>
<dbReference type="InterPro" id="IPR006369">
    <property type="entry name" value="Protohaem_IX_farnesylTrfase"/>
</dbReference>
<dbReference type="InterPro" id="IPR000537">
    <property type="entry name" value="UbiA_prenyltransferase"/>
</dbReference>
<dbReference type="InterPro" id="IPR030470">
    <property type="entry name" value="UbiA_prenylTrfase_CS"/>
</dbReference>
<dbReference type="InterPro" id="IPR044878">
    <property type="entry name" value="UbiA_sf"/>
</dbReference>
<dbReference type="NCBIfam" id="TIGR01473">
    <property type="entry name" value="cyoE_ctaB"/>
    <property type="match status" value="1"/>
</dbReference>
<dbReference type="NCBIfam" id="NF003348">
    <property type="entry name" value="PRK04375.1-1"/>
    <property type="match status" value="1"/>
</dbReference>
<dbReference type="PANTHER" id="PTHR43448">
    <property type="entry name" value="PROTOHEME IX FARNESYLTRANSFERASE, MITOCHONDRIAL"/>
    <property type="match status" value="1"/>
</dbReference>
<dbReference type="PANTHER" id="PTHR43448:SF2">
    <property type="entry name" value="PROTOHEME IX FARNESYLTRANSFERASE, MITOCHONDRIAL"/>
    <property type="match status" value="1"/>
</dbReference>
<dbReference type="Pfam" id="PF01040">
    <property type="entry name" value="UbiA"/>
    <property type="match status" value="1"/>
</dbReference>
<dbReference type="PROSITE" id="PS00943">
    <property type="entry name" value="UBIA"/>
    <property type="match status" value="1"/>
</dbReference>
<reference key="1">
    <citation type="submission" date="2007-03" db="EMBL/GenBank/DDBJ databases">
        <title>Complete sequence of Shewanella loihica PV-4.</title>
        <authorList>
            <consortium name="US DOE Joint Genome Institute"/>
            <person name="Copeland A."/>
            <person name="Lucas S."/>
            <person name="Lapidus A."/>
            <person name="Barry K."/>
            <person name="Detter J.C."/>
            <person name="Glavina del Rio T."/>
            <person name="Hammon N."/>
            <person name="Israni S."/>
            <person name="Dalin E."/>
            <person name="Tice H."/>
            <person name="Pitluck S."/>
            <person name="Chain P."/>
            <person name="Malfatti S."/>
            <person name="Shin M."/>
            <person name="Vergez L."/>
            <person name="Schmutz J."/>
            <person name="Larimer F."/>
            <person name="Land M."/>
            <person name="Hauser L."/>
            <person name="Kyrpides N."/>
            <person name="Mikhailova N."/>
            <person name="Romine M.F."/>
            <person name="Serres G."/>
            <person name="Fredrickson J."/>
            <person name="Tiedje J."/>
            <person name="Richardson P."/>
        </authorList>
    </citation>
    <scope>NUCLEOTIDE SEQUENCE [LARGE SCALE GENOMIC DNA]</scope>
    <source>
        <strain>ATCC BAA-1088 / PV-4</strain>
    </source>
</reference>
<organism>
    <name type="scientific">Shewanella loihica (strain ATCC BAA-1088 / PV-4)</name>
    <dbReference type="NCBI Taxonomy" id="323850"/>
    <lineage>
        <taxon>Bacteria</taxon>
        <taxon>Pseudomonadati</taxon>
        <taxon>Pseudomonadota</taxon>
        <taxon>Gammaproteobacteria</taxon>
        <taxon>Alteromonadales</taxon>
        <taxon>Shewanellaceae</taxon>
        <taxon>Shewanella</taxon>
    </lineage>
</organism>
<proteinExistence type="inferred from homology"/>
<comment type="function">
    <text evidence="1">Converts heme B (protoheme IX) to heme O by substitution of the vinyl group on carbon 2 of heme B porphyrin ring with a hydroxyethyl farnesyl side group.</text>
</comment>
<comment type="catalytic activity">
    <reaction evidence="1">
        <text>heme b + (2E,6E)-farnesyl diphosphate + H2O = Fe(II)-heme o + diphosphate</text>
        <dbReference type="Rhea" id="RHEA:28070"/>
        <dbReference type="ChEBI" id="CHEBI:15377"/>
        <dbReference type="ChEBI" id="CHEBI:33019"/>
        <dbReference type="ChEBI" id="CHEBI:60344"/>
        <dbReference type="ChEBI" id="CHEBI:60530"/>
        <dbReference type="ChEBI" id="CHEBI:175763"/>
        <dbReference type="EC" id="2.5.1.141"/>
    </reaction>
</comment>
<comment type="pathway">
    <text evidence="1">Porphyrin-containing compound metabolism; heme O biosynthesis; heme O from protoheme: step 1/1.</text>
</comment>
<comment type="subcellular location">
    <subcellularLocation>
        <location evidence="1">Cell inner membrane</location>
        <topology evidence="1">Multi-pass membrane protein</topology>
    </subcellularLocation>
</comment>
<comment type="miscellaneous">
    <text evidence="1">Carbon 2 of the heme B porphyrin ring is defined according to the Fischer nomenclature.</text>
</comment>
<comment type="similarity">
    <text evidence="1">Belongs to the UbiA prenyltransferase family. Protoheme IX farnesyltransferase subfamily.</text>
</comment>
<feature type="chain" id="PRO_0000326948" description="Protoheme IX farnesyltransferase 2">
    <location>
        <begin position="1"/>
        <end position="308"/>
    </location>
</feature>
<feature type="transmembrane region" description="Helical" evidence="1">
    <location>
        <begin position="20"/>
        <end position="40"/>
    </location>
</feature>
<feature type="transmembrane region" description="Helical" evidence="1">
    <location>
        <begin position="47"/>
        <end position="67"/>
    </location>
</feature>
<feature type="transmembrane region" description="Helical" evidence="1">
    <location>
        <begin position="92"/>
        <end position="114"/>
    </location>
</feature>
<feature type="transmembrane region" description="Helical" evidence="1">
    <location>
        <begin position="118"/>
        <end position="137"/>
    </location>
</feature>
<feature type="transmembrane region" description="Helical" evidence="1">
    <location>
        <begin position="144"/>
        <end position="164"/>
    </location>
</feature>
<feature type="transmembrane region" description="Helical" evidence="1">
    <location>
        <begin position="174"/>
        <end position="194"/>
    </location>
</feature>
<feature type="transmembrane region" description="Helical" evidence="1">
    <location>
        <begin position="218"/>
        <end position="238"/>
    </location>
</feature>
<feature type="transmembrane region" description="Helical" evidence="1">
    <location>
        <begin position="240"/>
        <end position="260"/>
    </location>
</feature>
<feature type="transmembrane region" description="Helical" evidence="1">
    <location>
        <begin position="275"/>
        <end position="295"/>
    </location>
</feature>